<comment type="function">
    <text evidence="1">Omega-conotoxins act at presynaptic membranes, they bind and block voltage-gated calcium channels (Cav).</text>
</comment>
<comment type="subcellular location">
    <subcellularLocation>
        <location evidence="1">Secreted</location>
    </subcellularLocation>
</comment>
<comment type="tissue specificity">
    <text>Expressed by the venom duct.</text>
</comment>
<comment type="domain">
    <text evidence="1">The presence of a 'disulfide through disulfide knot' structurally defines this protein as a knottin.</text>
</comment>
<comment type="domain">
    <text>The cysteine framework is VI/VII (C-C-CC-C-C).</text>
</comment>
<comment type="similarity">
    <text evidence="3">Belongs to the conotoxin O1 superfamily.</text>
</comment>
<keyword id="KW-0108">Calcium channel impairing toxin</keyword>
<keyword id="KW-0165">Cleavage on pair of basic residues</keyword>
<keyword id="KW-1015">Disulfide bond</keyword>
<keyword id="KW-0872">Ion channel impairing toxin</keyword>
<keyword id="KW-0960">Knottin</keyword>
<keyword id="KW-0528">Neurotoxin</keyword>
<keyword id="KW-0638">Presynaptic neurotoxin</keyword>
<keyword id="KW-0964">Secreted</keyword>
<keyword id="KW-0732">Signal</keyword>
<keyword id="KW-0800">Toxin</keyword>
<keyword id="KW-1218">Voltage-gated calcium channel impairing toxin</keyword>
<feature type="signal peptide" evidence="2">
    <location>
        <begin position="1"/>
        <end position="22"/>
    </location>
</feature>
<feature type="propeptide" id="PRO_0000034958" evidence="1">
    <location>
        <begin position="23"/>
        <end position="50"/>
    </location>
</feature>
<feature type="peptide" id="PRO_0000034959" description="Omega-conotoxin-like TxO5">
    <location>
        <begin position="51"/>
        <end position="76"/>
    </location>
</feature>
<feature type="disulfide bond" evidence="1">
    <location>
        <begin position="51"/>
        <end position="66"/>
    </location>
</feature>
<feature type="disulfide bond" evidence="1">
    <location>
        <begin position="58"/>
        <end position="70"/>
    </location>
</feature>
<feature type="disulfide bond" evidence="1">
    <location>
        <begin position="65"/>
        <end position="75"/>
    </location>
</feature>
<proteinExistence type="evidence at transcript level"/>
<protein>
    <recommendedName>
        <fullName>Omega-conotoxin-like TxO5</fullName>
    </recommendedName>
</protein>
<organism>
    <name type="scientific">Conus textile</name>
    <name type="common">Cloth-of-gold cone</name>
    <dbReference type="NCBI Taxonomy" id="6494"/>
    <lineage>
        <taxon>Eukaryota</taxon>
        <taxon>Metazoa</taxon>
        <taxon>Spiralia</taxon>
        <taxon>Lophotrochozoa</taxon>
        <taxon>Mollusca</taxon>
        <taxon>Gastropoda</taxon>
        <taxon>Caenogastropoda</taxon>
        <taxon>Neogastropoda</taxon>
        <taxon>Conoidea</taxon>
        <taxon>Conidae</taxon>
        <taxon>Conus</taxon>
        <taxon>Cylinder</taxon>
    </lineage>
</organism>
<sequence>MKLTCMVIVAVLFLTAWTFVTAITSNGLENLFPNAHHEMKNPEASKLNKRCVPYEGPCNWLTQNCCDATCVVFWCL</sequence>
<name>O165_CONTE</name>
<evidence type="ECO:0000250" key="1"/>
<evidence type="ECO:0000255" key="2"/>
<evidence type="ECO:0000305" key="3"/>
<gene>
    <name type="primary">TXO5</name>
</gene>
<accession>Q9XZL2</accession>
<dbReference type="EMBL" id="AF146358">
    <property type="protein sequence ID" value="AAD31918.1"/>
    <property type="molecule type" value="mRNA"/>
</dbReference>
<dbReference type="SMR" id="Q9XZL2"/>
<dbReference type="ConoServer" id="872">
    <property type="toxin name" value="TxO5 precursor"/>
</dbReference>
<dbReference type="GO" id="GO:0005576">
    <property type="term" value="C:extracellular region"/>
    <property type="evidence" value="ECO:0007669"/>
    <property type="project" value="UniProtKB-SubCell"/>
</dbReference>
<dbReference type="GO" id="GO:0044231">
    <property type="term" value="C:host cell presynaptic membrane"/>
    <property type="evidence" value="ECO:0007669"/>
    <property type="project" value="UniProtKB-KW"/>
</dbReference>
<dbReference type="GO" id="GO:0005246">
    <property type="term" value="F:calcium channel regulator activity"/>
    <property type="evidence" value="ECO:0007669"/>
    <property type="project" value="UniProtKB-KW"/>
</dbReference>
<dbReference type="GO" id="GO:0008200">
    <property type="term" value="F:ion channel inhibitor activity"/>
    <property type="evidence" value="ECO:0007669"/>
    <property type="project" value="InterPro"/>
</dbReference>
<dbReference type="GO" id="GO:0090729">
    <property type="term" value="F:toxin activity"/>
    <property type="evidence" value="ECO:0007669"/>
    <property type="project" value="UniProtKB-KW"/>
</dbReference>
<dbReference type="InterPro" id="IPR004214">
    <property type="entry name" value="Conotoxin"/>
</dbReference>
<dbReference type="InterPro" id="IPR012321">
    <property type="entry name" value="Conotoxin_omega-typ_CS"/>
</dbReference>
<dbReference type="Pfam" id="PF02950">
    <property type="entry name" value="Conotoxin"/>
    <property type="match status" value="1"/>
</dbReference>
<dbReference type="PROSITE" id="PS60004">
    <property type="entry name" value="OMEGA_CONOTOXIN"/>
    <property type="match status" value="1"/>
</dbReference>
<reference key="1">
    <citation type="journal article" date="1999" name="Peptides">
        <title>Conopeptides from Conus striatus and Conus textile by cDNA cloning.</title>
        <authorList>
            <person name="Lu B.-S."/>
            <person name="Yu F."/>
            <person name="Zhao D."/>
            <person name="Huang P.-T."/>
            <person name="Huang C.-F."/>
        </authorList>
    </citation>
    <scope>NUCLEOTIDE SEQUENCE [MRNA]</scope>
    <source>
        <tissue>Venom duct</tissue>
    </source>
</reference>